<accession>Q9D328</accession>
<accession>Q9DB64</accession>
<keyword id="KW-0143">Chaperone</keyword>
<keyword id="KW-0968">Cytoplasmic vesicle</keyword>
<keyword id="KW-0256">Endoplasmic reticulum</keyword>
<keyword id="KW-0472">Membrane</keyword>
<keyword id="KW-0576">Peroxisome</keyword>
<keyword id="KW-1185">Reference proteome</keyword>
<keyword id="KW-0812">Transmembrane</keyword>
<keyword id="KW-1133">Transmembrane helix</keyword>
<protein>
    <recommendedName>
        <fullName evidence="12 14 15 16 17">Novel acetylcholine receptor chaperone</fullName>
    </recommendedName>
    <alternativeName>
        <fullName>Peroxisomal membrane protein 52</fullName>
        <shortName>PMP52</shortName>
    </alternativeName>
    <alternativeName>
        <fullName>Transmembrane protein 35A</fullName>
    </alternativeName>
</protein>
<feature type="chain" id="PRO_0000271609" description="Novel acetylcholine receptor chaperone">
    <location>
        <begin position="1"/>
        <end position="167"/>
    </location>
</feature>
<feature type="topological domain" description="Cytoplasmic" evidence="18">
    <location>
        <begin position="1"/>
        <end position="5"/>
    </location>
</feature>
<feature type="transmembrane region" description="Helical; Name=1" evidence="3">
    <location>
        <begin position="6"/>
        <end position="26"/>
    </location>
</feature>
<feature type="topological domain" description="Lumenal" evidence="18">
    <location>
        <begin position="27"/>
        <end position="61"/>
    </location>
</feature>
<feature type="transmembrane region" description="Helical; Name=2" evidence="3">
    <location>
        <begin position="62"/>
        <end position="82"/>
    </location>
</feature>
<feature type="topological domain" description="Cytoplasmic" evidence="18">
    <location>
        <begin position="83"/>
        <end position="88"/>
    </location>
</feature>
<feature type="transmembrane region" description="Helical; Name=3" evidence="3">
    <location>
        <begin position="89"/>
        <end position="109"/>
    </location>
</feature>
<feature type="topological domain" description="Lumenal" evidence="18">
    <location>
        <begin position="110"/>
        <end position="114"/>
    </location>
</feature>
<feature type="transmembrane region" description="Helical; Name=4" evidence="3">
    <location>
        <begin position="115"/>
        <end position="132"/>
    </location>
</feature>
<feature type="topological domain" description="Cytoplasmic" evidence="18">
    <location>
        <begin position="133"/>
        <end position="167"/>
    </location>
</feature>
<feature type="region of interest" description="Interaction with NGFR" evidence="2">
    <location>
        <begin position="43"/>
        <end position="54"/>
    </location>
</feature>
<feature type="region of interest" description="Disordered" evidence="4">
    <location>
        <begin position="135"/>
        <end position="167"/>
    </location>
</feature>
<feature type="compositionally biased region" description="Basic and acidic residues" evidence="4">
    <location>
        <begin position="135"/>
        <end position="145"/>
    </location>
</feature>
<feature type="sequence conflict" description="In Ref. 1; BAB23865." evidence="18" ref="1">
    <original>D</original>
    <variation>N</variation>
    <location>
        <position position="88"/>
    </location>
</feature>
<gene>
    <name evidence="19" type="primary">Tmem35a</name>
    <name evidence="12 14 15 16 17" type="synonym">Nacho</name>
    <name evidence="13" type="synonym">Tmem35</name>
</gene>
<proteinExistence type="evidence at protein level"/>
<sequence>MASPRTITIMALSVALGLFFVFMGTIKLTPRLSKDAYSEMKRAYKSYVRALPLLKKMGINSILLRKSIGALEVACGIVMTLVPGRPKDVANFFLLLLVLAVLFFHQLVGDPLKRYAHALVFGILLTCRLLIARKPEDRSSEKKALPESAEEQPSLYEKAPQGKVKVS</sequence>
<dbReference type="EMBL" id="AK005180">
    <property type="protein sequence ID" value="BAB23865.1"/>
    <property type="molecule type" value="mRNA"/>
</dbReference>
<dbReference type="EMBL" id="AK018535">
    <property type="protein sequence ID" value="BAB31260.1"/>
    <property type="molecule type" value="mRNA"/>
</dbReference>
<dbReference type="EMBL" id="AK042538">
    <property type="protein sequence ID" value="BAC31285.1"/>
    <property type="molecule type" value="mRNA"/>
</dbReference>
<dbReference type="EMBL" id="AK043881">
    <property type="protein sequence ID" value="BAC31693.1"/>
    <property type="molecule type" value="mRNA"/>
</dbReference>
<dbReference type="EMBL" id="BC042623">
    <property type="protein sequence ID" value="AAH42623.1"/>
    <property type="molecule type" value="mRNA"/>
</dbReference>
<dbReference type="EMBL" id="BC050880">
    <property type="protein sequence ID" value="AAH50880.1"/>
    <property type="molecule type" value="mRNA"/>
</dbReference>
<dbReference type="CCDS" id="CCDS30392.1"/>
<dbReference type="RefSeq" id="NP_080515.1">
    <property type="nucleotide sequence ID" value="NM_026239.2"/>
</dbReference>
<dbReference type="SMR" id="Q9D328"/>
<dbReference type="BioGRID" id="212279">
    <property type="interactions" value="2"/>
</dbReference>
<dbReference type="FunCoup" id="Q9D328">
    <property type="interactions" value="484"/>
</dbReference>
<dbReference type="STRING" id="10090.ENSMUSP00000044926"/>
<dbReference type="iPTMnet" id="Q9D328"/>
<dbReference type="PhosphoSitePlus" id="Q9D328"/>
<dbReference type="SwissPalm" id="Q9D328"/>
<dbReference type="PaxDb" id="10090-ENSMUSP00000044926"/>
<dbReference type="PeptideAtlas" id="Q9D328"/>
<dbReference type="ProteomicsDB" id="259226"/>
<dbReference type="Antibodypedia" id="28590">
    <property type="antibodies" value="31 antibodies from 14 providers"/>
</dbReference>
<dbReference type="DNASU" id="67564"/>
<dbReference type="Ensembl" id="ENSMUST00000037687.8">
    <property type="protein sequence ID" value="ENSMUSP00000044926.8"/>
    <property type="gene ID" value="ENSMUSG00000033578.8"/>
</dbReference>
<dbReference type="GeneID" id="67564"/>
<dbReference type="KEGG" id="mmu:67564"/>
<dbReference type="UCSC" id="uc009uft.1">
    <property type="organism name" value="mouse"/>
</dbReference>
<dbReference type="AGR" id="MGI:1914814"/>
<dbReference type="CTD" id="59353"/>
<dbReference type="MGI" id="MGI:1914814">
    <property type="gene designation" value="Tmem35a"/>
</dbReference>
<dbReference type="VEuPathDB" id="HostDB:ENSMUSG00000033578"/>
<dbReference type="eggNOG" id="ENOG502RXPR">
    <property type="taxonomic scope" value="Eukaryota"/>
</dbReference>
<dbReference type="GeneTree" id="ENSGT00940000154325"/>
<dbReference type="HOGENOM" id="CLU_121618_0_0_1"/>
<dbReference type="InParanoid" id="Q9D328"/>
<dbReference type="OMA" id="YQTSRRE"/>
<dbReference type="OrthoDB" id="432685at2759"/>
<dbReference type="PhylomeDB" id="Q9D328"/>
<dbReference type="TreeFam" id="TF300206"/>
<dbReference type="BioGRID-ORCS" id="67564">
    <property type="hits" value="1 hit in 78 CRISPR screens"/>
</dbReference>
<dbReference type="CD-CODE" id="CE726F99">
    <property type="entry name" value="Postsynaptic density"/>
</dbReference>
<dbReference type="ChiTaRS" id="Tmem35a">
    <property type="organism name" value="mouse"/>
</dbReference>
<dbReference type="PRO" id="PR:Q9D328"/>
<dbReference type="Proteomes" id="UP000000589">
    <property type="component" value="Chromosome X"/>
</dbReference>
<dbReference type="RNAct" id="Q9D328">
    <property type="molecule type" value="protein"/>
</dbReference>
<dbReference type="Bgee" id="ENSMUSG00000033578">
    <property type="expression patterns" value="Expressed in adrenal gland and 194 other cell types or tissues"/>
</dbReference>
<dbReference type="GO" id="GO:0031410">
    <property type="term" value="C:cytoplasmic vesicle"/>
    <property type="evidence" value="ECO:0007669"/>
    <property type="project" value="UniProtKB-KW"/>
</dbReference>
<dbReference type="GO" id="GO:0005783">
    <property type="term" value="C:endoplasmic reticulum"/>
    <property type="evidence" value="ECO:0000314"/>
    <property type="project" value="UniProtKB"/>
</dbReference>
<dbReference type="GO" id="GO:0005789">
    <property type="term" value="C:endoplasmic reticulum membrane"/>
    <property type="evidence" value="ECO:0007669"/>
    <property type="project" value="UniProtKB-SubCell"/>
</dbReference>
<dbReference type="GO" id="GO:0005778">
    <property type="term" value="C:peroxisomal membrane"/>
    <property type="evidence" value="ECO:0007669"/>
    <property type="project" value="UniProtKB-SubCell"/>
</dbReference>
<dbReference type="GO" id="GO:0030548">
    <property type="term" value="F:acetylcholine receptor regulator activity"/>
    <property type="evidence" value="ECO:0000315"/>
    <property type="project" value="UniProtKB"/>
</dbReference>
<dbReference type="GO" id="GO:0051131">
    <property type="term" value="P:chaperone-mediated protein complex assembly"/>
    <property type="evidence" value="ECO:0000315"/>
    <property type="project" value="UniProtKB"/>
</dbReference>
<dbReference type="GO" id="GO:2000010">
    <property type="term" value="P:positive regulation of protein localization to cell surface"/>
    <property type="evidence" value="ECO:0000315"/>
    <property type="project" value="UniProtKB"/>
</dbReference>
<dbReference type="InterPro" id="IPR040399">
    <property type="entry name" value="TMEM35A/B"/>
</dbReference>
<dbReference type="PANTHER" id="PTHR13163:SF0">
    <property type="entry name" value="NOVEL ACETYLCHOLINE RECEPTOR CHAPERONE"/>
    <property type="match status" value="1"/>
</dbReference>
<dbReference type="PANTHER" id="PTHR13163">
    <property type="entry name" value="SPINAL CORD EXPRESSION PROTEIN 4"/>
    <property type="match status" value="1"/>
</dbReference>
<comment type="function">
    <text evidence="1 6 8 9 10">Molecular chaperone which mediates the proper assembly and functional expression of the nicotinic acetylcholine receptors (nAChRs) throughout the brain (PubMed:26875622, PubMed:28445721, PubMed:32204458). Essential for the proper folding, assembly, function and surface trafficking of alpha-7 (CHRNA7), alpha-4-beta-2, alpha-3-beta-2 and alpha-3-beta-4 receptors (PubMed:26875622, PubMed:28445721, PubMed:32204458). Stably associates with ribophorin-1 (RPN1) and ribophorin-2 (RPN2) (components of the oligosaccharyl transferase (OST) complex) and with calnexin (CANX), both of which are critical for NACHO-mediated effects on CHRNA7 assembly and function (PubMed:32783947). Facilitates the proper folding and assembly of alpha-6-beta-2 and alpha-6-beta-2-beta-3 receptors and acts at early stages of the nAChRs subunit assembly (PubMed:28445721). Promotes the expression of the alpha-4(2):beta-2(3) stoichiometric form over the alpha-4(3):beta-2(2) form (By similarity).</text>
</comment>
<comment type="subunit">
    <text evidence="2 10">May interact with NGFR (By similarity). Interacts with RPN1, RPN2 and CANX (PubMed:32783947).</text>
</comment>
<comment type="subcellular location">
    <subcellularLocation>
        <location evidence="5">Peroxisome membrane</location>
        <topology evidence="3">Multi-pass membrane protein</topology>
    </subcellularLocation>
    <subcellularLocation>
        <location evidence="2">Cytoplasmic vesicle</location>
    </subcellularLocation>
    <subcellularLocation>
        <location evidence="8">Endoplasmic reticulum membrane</location>
        <topology evidence="3">Multi-pass membrane protein</topology>
    </subcellularLocation>
    <text evidence="2">Shedding may lead to a soluble peptide.</text>
</comment>
<comment type="tissue specificity">
    <text evidence="6 7 8 11">Brain (at protein level) (PubMed:26875622, PubMed:27170659, PubMed:28445721). Expressed in the spinal cord dorsal horn (at protein level) (PubMed:33422618).</text>
</comment>
<comment type="disruption phenotype">
    <text evidence="6 7 8 9 11">Mice show a complete disruption of the assembly and function of the neuronal acetylcholine receptor (nAChR) subunit alpha-7 (CHRNA7) in the brain (PubMed:26875622, PubMed:32204458). Exhibit enhanced locomotor activity, profound abnormalities in spatial/working memory and a significant reduction of assembled nAChRs in the brain (PubMed:28445721). Display thermal hyperalgesia and mechanical allodynia accompanied by an increased number of microglia in the spinal cord dorsal horn (PubMed:33422618). Exhibit elevated basal serum corticosterone accompanied by increased anxiety-like behavior and an impairment of long-term memory (PubMed:27170659).</text>
</comment>
<comment type="similarity">
    <text evidence="18">Belongs to the DoxX family.</text>
</comment>
<reference key="1">
    <citation type="journal article" date="2005" name="Science">
        <title>The transcriptional landscape of the mammalian genome.</title>
        <authorList>
            <person name="Carninci P."/>
            <person name="Kasukawa T."/>
            <person name="Katayama S."/>
            <person name="Gough J."/>
            <person name="Frith M.C."/>
            <person name="Maeda N."/>
            <person name="Oyama R."/>
            <person name="Ravasi T."/>
            <person name="Lenhard B."/>
            <person name="Wells C."/>
            <person name="Kodzius R."/>
            <person name="Shimokawa K."/>
            <person name="Bajic V.B."/>
            <person name="Brenner S.E."/>
            <person name="Batalov S."/>
            <person name="Forrest A.R."/>
            <person name="Zavolan M."/>
            <person name="Davis M.J."/>
            <person name="Wilming L.G."/>
            <person name="Aidinis V."/>
            <person name="Allen J.E."/>
            <person name="Ambesi-Impiombato A."/>
            <person name="Apweiler R."/>
            <person name="Aturaliya R.N."/>
            <person name="Bailey T.L."/>
            <person name="Bansal M."/>
            <person name="Baxter L."/>
            <person name="Beisel K.W."/>
            <person name="Bersano T."/>
            <person name="Bono H."/>
            <person name="Chalk A.M."/>
            <person name="Chiu K.P."/>
            <person name="Choudhary V."/>
            <person name="Christoffels A."/>
            <person name="Clutterbuck D.R."/>
            <person name="Crowe M.L."/>
            <person name="Dalla E."/>
            <person name="Dalrymple B.P."/>
            <person name="de Bono B."/>
            <person name="Della Gatta G."/>
            <person name="di Bernardo D."/>
            <person name="Down T."/>
            <person name="Engstrom P."/>
            <person name="Fagiolini M."/>
            <person name="Faulkner G."/>
            <person name="Fletcher C.F."/>
            <person name="Fukushima T."/>
            <person name="Furuno M."/>
            <person name="Futaki S."/>
            <person name="Gariboldi M."/>
            <person name="Georgii-Hemming P."/>
            <person name="Gingeras T.R."/>
            <person name="Gojobori T."/>
            <person name="Green R.E."/>
            <person name="Gustincich S."/>
            <person name="Harbers M."/>
            <person name="Hayashi Y."/>
            <person name="Hensch T.K."/>
            <person name="Hirokawa N."/>
            <person name="Hill D."/>
            <person name="Huminiecki L."/>
            <person name="Iacono M."/>
            <person name="Ikeo K."/>
            <person name="Iwama A."/>
            <person name="Ishikawa T."/>
            <person name="Jakt M."/>
            <person name="Kanapin A."/>
            <person name="Katoh M."/>
            <person name="Kawasawa Y."/>
            <person name="Kelso J."/>
            <person name="Kitamura H."/>
            <person name="Kitano H."/>
            <person name="Kollias G."/>
            <person name="Krishnan S.P."/>
            <person name="Kruger A."/>
            <person name="Kummerfeld S.K."/>
            <person name="Kurochkin I.V."/>
            <person name="Lareau L.F."/>
            <person name="Lazarevic D."/>
            <person name="Lipovich L."/>
            <person name="Liu J."/>
            <person name="Liuni S."/>
            <person name="McWilliam S."/>
            <person name="Madan Babu M."/>
            <person name="Madera M."/>
            <person name="Marchionni L."/>
            <person name="Matsuda H."/>
            <person name="Matsuzawa S."/>
            <person name="Miki H."/>
            <person name="Mignone F."/>
            <person name="Miyake S."/>
            <person name="Morris K."/>
            <person name="Mottagui-Tabar S."/>
            <person name="Mulder N."/>
            <person name="Nakano N."/>
            <person name="Nakauchi H."/>
            <person name="Ng P."/>
            <person name="Nilsson R."/>
            <person name="Nishiguchi S."/>
            <person name="Nishikawa S."/>
            <person name="Nori F."/>
            <person name="Ohara O."/>
            <person name="Okazaki Y."/>
            <person name="Orlando V."/>
            <person name="Pang K.C."/>
            <person name="Pavan W.J."/>
            <person name="Pavesi G."/>
            <person name="Pesole G."/>
            <person name="Petrovsky N."/>
            <person name="Piazza S."/>
            <person name="Reed J."/>
            <person name="Reid J.F."/>
            <person name="Ring B.Z."/>
            <person name="Ringwald M."/>
            <person name="Rost B."/>
            <person name="Ruan Y."/>
            <person name="Salzberg S.L."/>
            <person name="Sandelin A."/>
            <person name="Schneider C."/>
            <person name="Schoenbach C."/>
            <person name="Sekiguchi K."/>
            <person name="Semple C.A."/>
            <person name="Seno S."/>
            <person name="Sessa L."/>
            <person name="Sheng Y."/>
            <person name="Shibata Y."/>
            <person name="Shimada H."/>
            <person name="Shimada K."/>
            <person name="Silva D."/>
            <person name="Sinclair B."/>
            <person name="Sperling S."/>
            <person name="Stupka E."/>
            <person name="Sugiura K."/>
            <person name="Sultana R."/>
            <person name="Takenaka Y."/>
            <person name="Taki K."/>
            <person name="Tammoja K."/>
            <person name="Tan S.L."/>
            <person name="Tang S."/>
            <person name="Taylor M.S."/>
            <person name="Tegner J."/>
            <person name="Teichmann S.A."/>
            <person name="Ueda H.R."/>
            <person name="van Nimwegen E."/>
            <person name="Verardo R."/>
            <person name="Wei C.L."/>
            <person name="Yagi K."/>
            <person name="Yamanishi H."/>
            <person name="Zabarovsky E."/>
            <person name="Zhu S."/>
            <person name="Zimmer A."/>
            <person name="Hide W."/>
            <person name="Bult C."/>
            <person name="Grimmond S.M."/>
            <person name="Teasdale R.D."/>
            <person name="Liu E.T."/>
            <person name="Brusic V."/>
            <person name="Quackenbush J."/>
            <person name="Wahlestedt C."/>
            <person name="Mattick J.S."/>
            <person name="Hume D.A."/>
            <person name="Kai C."/>
            <person name="Sasaki D."/>
            <person name="Tomaru Y."/>
            <person name="Fukuda S."/>
            <person name="Kanamori-Katayama M."/>
            <person name="Suzuki M."/>
            <person name="Aoki J."/>
            <person name="Arakawa T."/>
            <person name="Iida J."/>
            <person name="Imamura K."/>
            <person name="Itoh M."/>
            <person name="Kato T."/>
            <person name="Kawaji H."/>
            <person name="Kawagashira N."/>
            <person name="Kawashima T."/>
            <person name="Kojima M."/>
            <person name="Kondo S."/>
            <person name="Konno H."/>
            <person name="Nakano K."/>
            <person name="Ninomiya N."/>
            <person name="Nishio T."/>
            <person name="Okada M."/>
            <person name="Plessy C."/>
            <person name="Shibata K."/>
            <person name="Shiraki T."/>
            <person name="Suzuki S."/>
            <person name="Tagami M."/>
            <person name="Waki K."/>
            <person name="Watahiki A."/>
            <person name="Okamura-Oho Y."/>
            <person name="Suzuki H."/>
            <person name="Kawai J."/>
            <person name="Hayashizaki Y."/>
        </authorList>
    </citation>
    <scope>NUCLEOTIDE SEQUENCE [LARGE SCALE MRNA]</scope>
    <source>
        <strain>C57BL/6J</strain>
        <tissue>Brain cortex</tissue>
        <tissue>Cerebellum</tissue>
        <tissue>Colon</tissue>
    </source>
</reference>
<reference key="2">
    <citation type="journal article" date="2004" name="Genome Res.">
        <title>The status, quality, and expansion of the NIH full-length cDNA project: the Mammalian Gene Collection (MGC).</title>
        <authorList>
            <consortium name="The MGC Project Team"/>
        </authorList>
    </citation>
    <scope>NUCLEOTIDE SEQUENCE [LARGE SCALE MRNA]</scope>
    <source>
        <strain>C57BL/6J</strain>
        <tissue>Brain</tissue>
        <tissue>Eye</tissue>
    </source>
</reference>
<reference key="3">
    <citation type="journal article" date="2007" name="Mol. Cell. Proteomics">
        <title>Proteomics characterization of mouse kidney peroxisomes by tandem mass spectrometry and protein correlation profiling.</title>
        <authorList>
            <person name="Wiese S."/>
            <person name="Gronemeyer T."/>
            <person name="Ofman R."/>
            <person name="Kunze M."/>
            <person name="Grou C.P."/>
            <person name="Almeida J.A."/>
            <person name="Eisenacher M."/>
            <person name="Stephan C."/>
            <person name="Hayen H."/>
            <person name="Schollenberger L."/>
            <person name="Korosec T."/>
            <person name="Waterham H.R."/>
            <person name="Schliebs W."/>
            <person name="Erdmann R."/>
            <person name="Berger J."/>
            <person name="Meyer H.E."/>
            <person name="Just W."/>
            <person name="Azevedo J.E."/>
            <person name="Wanders R.J."/>
            <person name="Warscheid B."/>
        </authorList>
    </citation>
    <scope>PEROXISOMAL SUBCELLULAR LOCATION</scope>
    <source>
        <tissue>Kidney</tissue>
    </source>
</reference>
<reference key="4">
    <citation type="journal article" date="2010" name="Cell">
        <title>A tissue-specific atlas of mouse protein phosphorylation and expression.</title>
        <authorList>
            <person name="Huttlin E.L."/>
            <person name="Jedrychowski M.P."/>
            <person name="Elias J.E."/>
            <person name="Goswami T."/>
            <person name="Rad R."/>
            <person name="Beausoleil S.A."/>
            <person name="Villen J."/>
            <person name="Haas W."/>
            <person name="Sowa M.E."/>
            <person name="Gygi S.P."/>
        </authorList>
    </citation>
    <scope>IDENTIFICATION BY MASS SPECTROMETRY [LARGE SCALE ANALYSIS]</scope>
    <source>
        <tissue>Brain</tissue>
        <tissue>Heart</tissue>
        <tissue>Kidney</tissue>
        <tissue>Lung</tissue>
        <tissue>Pancreas</tissue>
        <tissue>Spleen</tissue>
        <tissue>Testis</tissue>
    </source>
</reference>
<reference key="5">
    <citation type="journal article" date="2016" name="Am. J. Physiol.">
        <title>Deletion of novel protein TMEM35 alters stress-related functions and impairs long-term memory in mice.</title>
        <authorList>
            <person name="Kennedy B.C."/>
            <person name="Dimova J.G."/>
            <person name="Dakoji S."/>
            <person name="Yuan L.L."/>
            <person name="Gewirtz J.C."/>
            <person name="Tran P.V."/>
        </authorList>
    </citation>
    <scope>DISRUPTION PHENOTYPE</scope>
    <scope>TISSUE SPECIFICITY</scope>
</reference>
<reference key="6">
    <citation type="journal article" date="2016" name="Neuron">
        <title>Brain alpha7 Nicotinic Acetylcholine Receptor Assembly Requires NACHO.</title>
        <authorList>
            <person name="Gu S."/>
            <person name="Matta J.A."/>
            <person name="Lord B."/>
            <person name="Harrington A.W."/>
            <person name="Sutton S.W."/>
            <person name="Davini W.B."/>
            <person name="Bredt D.S."/>
        </authorList>
    </citation>
    <scope>FUNCTION</scope>
    <scope>TISSUE SPECIFICITY</scope>
    <scope>DISRUPTION PHENOTYPE</scope>
</reference>
<reference key="7">
    <citation type="journal article" date="2017" name="Cell Rep.">
        <title>NACHO Mediates Nicotinic Acetylcholine Receptor Function throughout the Brain.</title>
        <authorList>
            <person name="Matta J.A."/>
            <person name="Gu S."/>
            <person name="Davini W.B."/>
            <person name="Lord B."/>
            <person name="Siuda E.R."/>
            <person name="Harrington A.W."/>
            <person name="Bredt D.S."/>
        </authorList>
    </citation>
    <scope>FUNCTION</scope>
    <scope>SUBCELLULAR LOCATION</scope>
    <scope>DISRUPTION PHENOTYPE</scope>
    <scope>TISSUE SPECIFICITY</scope>
</reference>
<reference key="8">
    <citation type="journal article" date="2020" name="Biomolecules">
        <title>Why Does Knocking Out NACHO, But Not RIC3, Completely Block Expression of alpha7 Nicotinic Receptors in Mouse Brain?</title>
        <authorList>
            <person name="Deshpande A."/>
            <person name="Vinayakamoorthy R.M."/>
            <person name="Garg B.K."/>
            <person name="Thummapudi J.P."/>
            <person name="Oza G."/>
            <person name="Adhikari K."/>
            <person name="Agarwal A."/>
            <person name="Dalvi P."/>
            <person name="Iyer S."/>
            <person name="Thulasi Raman S."/>
            <person name="Ramesh V."/>
            <person name="Rameshbabu A."/>
            <person name="Rezvaya A."/>
            <person name="Sukumaran S."/>
            <person name="Swaminathan S."/>
            <person name="Tilak B."/>
            <person name="Wang Z."/>
            <person name="Tran P.V."/>
            <person name="Loring R.H."/>
        </authorList>
    </citation>
    <scope>FUNCTION</scope>
    <scope>DISRUPTION PHENOTYPE</scope>
</reference>
<reference key="9">
    <citation type="journal article" date="2020" name="Cell Rep.">
        <title>NACHO Engages N-Glycosylation ER Chaperone Pathways for alpha7 Nicotinic Receptor Assembly.</title>
        <authorList>
            <person name="Kweon H.J."/>
            <person name="Gu S."/>
            <person name="Witham E."/>
            <person name="Dhara M."/>
            <person name="Yu H."/>
            <person name="Mandon E.D."/>
            <person name="Jawhari A."/>
            <person name="Bredt D.S."/>
        </authorList>
    </citation>
    <scope>FUNCTION</scope>
    <scope>INTERACTION WITH RPN1; RPN2 AND CANX</scope>
</reference>
<reference key="10">
    <citation type="journal article" date="2021" name="Neuroscience">
        <title>The nAChR Chaperone TMEM35a (NACHO) Contributes to the Development of Hyperalgesia in Mice.</title>
        <authorList>
            <person name="Khasabov S.G."/>
            <person name="Rogness V.M."/>
            <person name="Beeson M.B."/>
            <person name="Vulchanova-Hart L."/>
            <person name="Yuan L.L."/>
            <person name="Simone D.A."/>
            <person name="Tran P.V."/>
        </authorList>
    </citation>
    <scope>DISRUPTION PHENOTYPE</scope>
    <scope>TISSUE SPECIFICITY</scope>
</reference>
<evidence type="ECO:0000250" key="1">
    <source>
        <dbReference type="UniProtKB" id="Q53FP2"/>
    </source>
</evidence>
<evidence type="ECO:0000250" key="2">
    <source>
        <dbReference type="UniProtKB" id="Q6JAM9"/>
    </source>
</evidence>
<evidence type="ECO:0000255" key="3"/>
<evidence type="ECO:0000256" key="4">
    <source>
        <dbReference type="SAM" id="MobiDB-lite"/>
    </source>
</evidence>
<evidence type="ECO:0000269" key="5">
    <source>
    </source>
</evidence>
<evidence type="ECO:0000269" key="6">
    <source>
    </source>
</evidence>
<evidence type="ECO:0000269" key="7">
    <source>
    </source>
</evidence>
<evidence type="ECO:0000269" key="8">
    <source>
    </source>
</evidence>
<evidence type="ECO:0000269" key="9">
    <source>
    </source>
</evidence>
<evidence type="ECO:0000269" key="10">
    <source>
    </source>
</evidence>
<evidence type="ECO:0000269" key="11">
    <source>
    </source>
</evidence>
<evidence type="ECO:0000303" key="12">
    <source>
    </source>
</evidence>
<evidence type="ECO:0000303" key="13">
    <source>
    </source>
</evidence>
<evidence type="ECO:0000303" key="14">
    <source>
    </source>
</evidence>
<evidence type="ECO:0000303" key="15">
    <source>
    </source>
</evidence>
<evidence type="ECO:0000303" key="16">
    <source>
    </source>
</evidence>
<evidence type="ECO:0000303" key="17">
    <source>
    </source>
</evidence>
<evidence type="ECO:0000305" key="18"/>
<evidence type="ECO:0000312" key="19">
    <source>
        <dbReference type="MGI" id="MGI:1914814"/>
    </source>
</evidence>
<name>NACHO_MOUSE</name>
<organism>
    <name type="scientific">Mus musculus</name>
    <name type="common">Mouse</name>
    <dbReference type="NCBI Taxonomy" id="10090"/>
    <lineage>
        <taxon>Eukaryota</taxon>
        <taxon>Metazoa</taxon>
        <taxon>Chordata</taxon>
        <taxon>Craniata</taxon>
        <taxon>Vertebrata</taxon>
        <taxon>Euteleostomi</taxon>
        <taxon>Mammalia</taxon>
        <taxon>Eutheria</taxon>
        <taxon>Euarchontoglires</taxon>
        <taxon>Glires</taxon>
        <taxon>Rodentia</taxon>
        <taxon>Myomorpha</taxon>
        <taxon>Muroidea</taxon>
        <taxon>Muridae</taxon>
        <taxon>Murinae</taxon>
        <taxon>Mus</taxon>
        <taxon>Mus</taxon>
    </lineage>
</organism>